<dbReference type="EMBL" id="X52731">
    <property type="protein sequence ID" value="CAA36945.1"/>
    <property type="molecule type" value="mRNA"/>
</dbReference>
<dbReference type="EMBL" id="M86730">
    <property type="protein sequence ID" value="AAA73198.1"/>
    <property type="molecule type" value="mRNA"/>
</dbReference>
<dbReference type="PIR" id="I46620">
    <property type="entry name" value="I46620"/>
</dbReference>
<dbReference type="PIR" id="S10532">
    <property type="entry name" value="S10532"/>
</dbReference>
<dbReference type="RefSeq" id="NP_999194.1">
    <property type="nucleotide sequence ID" value="NM_214029.1"/>
</dbReference>
<dbReference type="RefSeq" id="XP_005655255.1">
    <property type="nucleotide sequence ID" value="XM_005655198.3"/>
</dbReference>
<dbReference type="RefSeq" id="XP_013843310.1">
    <property type="nucleotide sequence ID" value="XM_013987856.2"/>
</dbReference>
<dbReference type="SMR" id="P18430"/>
<dbReference type="FunCoup" id="P18430">
    <property type="interactions" value="290"/>
</dbReference>
<dbReference type="STRING" id="9823.ENSSSCP00000008638"/>
<dbReference type="GlyCosmos" id="P18430">
    <property type="glycosylation" value="2 sites, No reported glycans"/>
</dbReference>
<dbReference type="GlyGen" id="P18430">
    <property type="glycosylation" value="2 sites"/>
</dbReference>
<dbReference type="PaxDb" id="9823-ENSSSCP00000008638"/>
<dbReference type="Ensembl" id="ENSSSCT00000008863.4">
    <property type="protein sequence ID" value="ENSSSCP00000008638.1"/>
    <property type="gene ID" value="ENSSSCG00000008090.4"/>
</dbReference>
<dbReference type="Ensembl" id="ENSSSCT00015073404.1">
    <property type="protein sequence ID" value="ENSSSCP00015029482.1"/>
    <property type="gene ID" value="ENSSSCG00015054935.1"/>
</dbReference>
<dbReference type="Ensembl" id="ENSSSCT00025005795.1">
    <property type="protein sequence ID" value="ENSSSCP00025002306.1"/>
    <property type="gene ID" value="ENSSSCG00025004335.1"/>
</dbReference>
<dbReference type="Ensembl" id="ENSSSCT00030086587.1">
    <property type="protein sequence ID" value="ENSSSCP00030039935.1"/>
    <property type="gene ID" value="ENSSSCG00030061899.1"/>
</dbReference>
<dbReference type="Ensembl" id="ENSSSCT00035049201.1">
    <property type="protein sequence ID" value="ENSSSCP00035019686.1"/>
    <property type="gene ID" value="ENSSSCG00035037108.1"/>
</dbReference>
<dbReference type="Ensembl" id="ENSSSCT00040076415.1">
    <property type="protein sequence ID" value="ENSSSCP00040032842.1"/>
    <property type="gene ID" value="ENSSSCG00040056346.1"/>
</dbReference>
<dbReference type="Ensembl" id="ENSSSCT00045035395.1">
    <property type="protein sequence ID" value="ENSSSCP00045024574.1"/>
    <property type="gene ID" value="ENSSSCG00045020752.1"/>
</dbReference>
<dbReference type="Ensembl" id="ENSSSCT00050105243.1">
    <property type="protein sequence ID" value="ENSSSCP00050046274.1"/>
    <property type="gene ID" value="ENSSSCG00050076581.1"/>
</dbReference>
<dbReference type="Ensembl" id="ENSSSCT00060081338.1">
    <property type="protein sequence ID" value="ENSSSCP00060035221.1"/>
    <property type="gene ID" value="ENSSSCG00060059637.1"/>
</dbReference>
<dbReference type="Ensembl" id="ENSSSCT00065087782.1">
    <property type="protein sequence ID" value="ENSSSCP00065038405.1"/>
    <property type="gene ID" value="ENSSSCG00065063958.1"/>
</dbReference>
<dbReference type="Ensembl" id="ENSSSCT00085012535">
    <property type="protein sequence ID" value="ENSSSCP00085009143"/>
    <property type="gene ID" value="ENSSSCG00085006586"/>
</dbReference>
<dbReference type="Ensembl" id="ENSSSCT00090055552">
    <property type="protein sequence ID" value="ENSSSCP00090034608"/>
    <property type="gene ID" value="ENSSSCG00090031411"/>
</dbReference>
<dbReference type="Ensembl" id="ENSSSCT00105047489">
    <property type="protein sequence ID" value="ENSSSCP00105033186"/>
    <property type="gene ID" value="ENSSSCG00105025025"/>
</dbReference>
<dbReference type="Ensembl" id="ENSSSCT00115021597">
    <property type="protein sequence ID" value="ENSSSCP00115020446"/>
    <property type="gene ID" value="ENSSSCG00115012500"/>
</dbReference>
<dbReference type="Ensembl" id="ENSSSCT00130041406">
    <property type="protein sequence ID" value="ENSSSCP00130029181"/>
    <property type="gene ID" value="ENSSSCG00130021357"/>
</dbReference>
<dbReference type="GeneID" id="397094"/>
<dbReference type="KEGG" id="ssc:397094"/>
<dbReference type="CTD" id="3552"/>
<dbReference type="VGNC" id="VGNC:89091">
    <property type="gene designation" value="IL1A"/>
</dbReference>
<dbReference type="eggNOG" id="ENOG502T3DD">
    <property type="taxonomic scope" value="Eukaryota"/>
</dbReference>
<dbReference type="GeneTree" id="ENSGT00390000013353"/>
<dbReference type="HOGENOM" id="CLU_090014_0_0_1"/>
<dbReference type="InParanoid" id="P18430"/>
<dbReference type="OMA" id="SNMKYNF"/>
<dbReference type="OrthoDB" id="9451248at2759"/>
<dbReference type="TreeFam" id="TF300203"/>
<dbReference type="Reactome" id="R-SSC-448706">
    <property type="pathway name" value="Interleukin-1 processing"/>
</dbReference>
<dbReference type="Reactome" id="R-SSC-5620971">
    <property type="pathway name" value="Pyroptosis"/>
</dbReference>
<dbReference type="Reactome" id="R-SSC-9020702">
    <property type="pathway name" value="Interleukin-1 signaling"/>
</dbReference>
<dbReference type="Proteomes" id="UP000008227">
    <property type="component" value="Chromosome 3"/>
</dbReference>
<dbReference type="Proteomes" id="UP000314985">
    <property type="component" value="Unplaced"/>
</dbReference>
<dbReference type="Proteomes" id="UP000694570">
    <property type="component" value="Unplaced"/>
</dbReference>
<dbReference type="Proteomes" id="UP000694571">
    <property type="component" value="Unplaced"/>
</dbReference>
<dbReference type="Proteomes" id="UP000694720">
    <property type="component" value="Unplaced"/>
</dbReference>
<dbReference type="Proteomes" id="UP000694722">
    <property type="component" value="Unplaced"/>
</dbReference>
<dbReference type="Proteomes" id="UP000694723">
    <property type="component" value="Unplaced"/>
</dbReference>
<dbReference type="Proteomes" id="UP000694724">
    <property type="component" value="Unplaced"/>
</dbReference>
<dbReference type="Proteomes" id="UP000694725">
    <property type="component" value="Unplaced"/>
</dbReference>
<dbReference type="Proteomes" id="UP000694726">
    <property type="component" value="Unplaced"/>
</dbReference>
<dbReference type="Proteomes" id="UP000694727">
    <property type="component" value="Unplaced"/>
</dbReference>
<dbReference type="Proteomes" id="UP000694728">
    <property type="component" value="Unplaced"/>
</dbReference>
<dbReference type="Bgee" id="ENSSSCG00000008090">
    <property type="expression patterns" value="Expressed in tonsil and 22 other cell types or tissues"/>
</dbReference>
<dbReference type="ExpressionAtlas" id="P18430">
    <property type="expression patterns" value="baseline and differential"/>
</dbReference>
<dbReference type="GO" id="GO:0005829">
    <property type="term" value="C:cytosol"/>
    <property type="evidence" value="ECO:0000250"/>
    <property type="project" value="UniProtKB"/>
</dbReference>
<dbReference type="GO" id="GO:0005615">
    <property type="term" value="C:extracellular space"/>
    <property type="evidence" value="ECO:0000250"/>
    <property type="project" value="UniProtKB"/>
</dbReference>
<dbReference type="GO" id="GO:0005634">
    <property type="term" value="C:nucleus"/>
    <property type="evidence" value="ECO:0007669"/>
    <property type="project" value="UniProtKB-SubCell"/>
</dbReference>
<dbReference type="GO" id="GO:0005507">
    <property type="term" value="F:copper ion binding"/>
    <property type="evidence" value="ECO:0000250"/>
    <property type="project" value="UniProtKB"/>
</dbReference>
<dbReference type="GO" id="GO:0005125">
    <property type="term" value="F:cytokine activity"/>
    <property type="evidence" value="ECO:0000318"/>
    <property type="project" value="GO_Central"/>
</dbReference>
<dbReference type="GO" id="GO:0005149">
    <property type="term" value="F:interleukin-1 receptor binding"/>
    <property type="evidence" value="ECO:0007669"/>
    <property type="project" value="InterPro"/>
</dbReference>
<dbReference type="GO" id="GO:0034605">
    <property type="term" value="P:cellular response to heat"/>
    <property type="evidence" value="ECO:0000250"/>
    <property type="project" value="UniProtKB"/>
</dbReference>
<dbReference type="GO" id="GO:0071222">
    <property type="term" value="P:cellular response to lipopolysaccharide"/>
    <property type="evidence" value="ECO:0000318"/>
    <property type="project" value="GO_Central"/>
</dbReference>
<dbReference type="GO" id="GO:0002248">
    <property type="term" value="P:connective tissue replacement involved in inflammatory response wound healing"/>
    <property type="evidence" value="ECO:0007669"/>
    <property type="project" value="Ensembl"/>
</dbReference>
<dbReference type="GO" id="GO:0019221">
    <property type="term" value="P:cytokine-mediated signaling pathway"/>
    <property type="evidence" value="ECO:0000318"/>
    <property type="project" value="GO_Central"/>
</dbReference>
<dbReference type="GO" id="GO:0035234">
    <property type="term" value="P:ectopic germ cell programmed cell death"/>
    <property type="evidence" value="ECO:0007669"/>
    <property type="project" value="Ensembl"/>
</dbReference>
<dbReference type="GO" id="GO:0097192">
    <property type="term" value="P:extrinsic apoptotic signaling pathway in absence of ligand"/>
    <property type="evidence" value="ECO:0007669"/>
    <property type="project" value="Ensembl"/>
</dbReference>
<dbReference type="GO" id="GO:0001660">
    <property type="term" value="P:fever generation"/>
    <property type="evidence" value="ECO:0007669"/>
    <property type="project" value="UniProtKB-KW"/>
</dbReference>
<dbReference type="GO" id="GO:0006955">
    <property type="term" value="P:immune response"/>
    <property type="evidence" value="ECO:0000318"/>
    <property type="project" value="GO_Central"/>
</dbReference>
<dbReference type="GO" id="GO:0006954">
    <property type="term" value="P:inflammatory response"/>
    <property type="evidence" value="ECO:0000318"/>
    <property type="project" value="GO_Central"/>
</dbReference>
<dbReference type="GO" id="GO:0006883">
    <property type="term" value="P:intracellular sodium ion homeostasis"/>
    <property type="evidence" value="ECO:0007669"/>
    <property type="project" value="Ensembl"/>
</dbReference>
<dbReference type="GO" id="GO:0008285">
    <property type="term" value="P:negative regulation of cell population proliferation"/>
    <property type="evidence" value="ECO:0007669"/>
    <property type="project" value="Ensembl"/>
</dbReference>
<dbReference type="GO" id="GO:0045766">
    <property type="term" value="P:positive regulation of angiogenesis"/>
    <property type="evidence" value="ECO:0007669"/>
    <property type="project" value="Ensembl"/>
</dbReference>
<dbReference type="GO" id="GO:0043123">
    <property type="term" value="P:positive regulation of canonical NF-kappaB signal transduction"/>
    <property type="evidence" value="ECO:0000318"/>
    <property type="project" value="GO_Central"/>
</dbReference>
<dbReference type="GO" id="GO:0051781">
    <property type="term" value="P:positive regulation of cell division"/>
    <property type="evidence" value="ECO:0007669"/>
    <property type="project" value="UniProtKB-KW"/>
</dbReference>
<dbReference type="GO" id="GO:0033092">
    <property type="term" value="P:positive regulation of immature T cell proliferation in thymus"/>
    <property type="evidence" value="ECO:0000318"/>
    <property type="project" value="GO_Central"/>
</dbReference>
<dbReference type="GO" id="GO:0032743">
    <property type="term" value="P:positive regulation of interleukin-2 production"/>
    <property type="evidence" value="ECO:0007669"/>
    <property type="project" value="Ensembl"/>
</dbReference>
<dbReference type="GO" id="GO:0045840">
    <property type="term" value="P:positive regulation of mitotic nuclear division"/>
    <property type="evidence" value="ECO:0007669"/>
    <property type="project" value="Ensembl"/>
</dbReference>
<dbReference type="GO" id="GO:0050714">
    <property type="term" value="P:positive regulation of protein secretion"/>
    <property type="evidence" value="ECO:0007669"/>
    <property type="project" value="Ensembl"/>
</dbReference>
<dbReference type="GO" id="GO:0045944">
    <property type="term" value="P:positive regulation of transcription by RNA polymerase II"/>
    <property type="evidence" value="ECO:0007669"/>
    <property type="project" value="Ensembl"/>
</dbReference>
<dbReference type="GO" id="GO:0010575">
    <property type="term" value="P:positive regulation of vascular endothelial growth factor production"/>
    <property type="evidence" value="ECO:0007669"/>
    <property type="project" value="Ensembl"/>
</dbReference>
<dbReference type="GO" id="GO:0070372">
    <property type="term" value="P:regulation of ERK1 and ERK2 cascade"/>
    <property type="evidence" value="ECO:0000318"/>
    <property type="project" value="GO_Central"/>
</dbReference>
<dbReference type="GO" id="GO:0046688">
    <property type="term" value="P:response to copper ion"/>
    <property type="evidence" value="ECO:0000250"/>
    <property type="project" value="UniProtKB"/>
</dbReference>
<dbReference type="CDD" id="cd23295">
    <property type="entry name" value="beta-trefoil_IL1A"/>
    <property type="match status" value="1"/>
</dbReference>
<dbReference type="FunFam" id="2.80.10.50:FF:000049">
    <property type="entry name" value="Interleukin-1 alpha"/>
    <property type="match status" value="1"/>
</dbReference>
<dbReference type="Gene3D" id="2.80.10.50">
    <property type="match status" value="1"/>
</dbReference>
<dbReference type="InterPro" id="IPR003295">
    <property type="entry name" value="IL-1_alpha"/>
</dbReference>
<dbReference type="InterPro" id="IPR020877">
    <property type="entry name" value="IL-1_CS"/>
</dbReference>
<dbReference type="InterPro" id="IPR000975">
    <property type="entry name" value="IL-1_fam"/>
</dbReference>
<dbReference type="InterPro" id="IPR003502">
    <property type="entry name" value="IL-1_propep"/>
</dbReference>
<dbReference type="InterPro" id="IPR008996">
    <property type="entry name" value="IL1/FGF"/>
</dbReference>
<dbReference type="PANTHER" id="PTHR10078:SF33">
    <property type="entry name" value="INTERLEUKIN-1 ALPHA"/>
    <property type="match status" value="1"/>
</dbReference>
<dbReference type="PANTHER" id="PTHR10078">
    <property type="entry name" value="INTERLEUKIN-1 FAMILY MEMBER"/>
    <property type="match status" value="1"/>
</dbReference>
<dbReference type="Pfam" id="PF00340">
    <property type="entry name" value="IL1"/>
    <property type="match status" value="1"/>
</dbReference>
<dbReference type="Pfam" id="PF02394">
    <property type="entry name" value="IL1_propep"/>
    <property type="match status" value="1"/>
</dbReference>
<dbReference type="PRINTS" id="PR00264">
    <property type="entry name" value="INTERLEUKIN1"/>
</dbReference>
<dbReference type="PRINTS" id="PR01358">
    <property type="entry name" value="INTRLEUKIN1A"/>
</dbReference>
<dbReference type="PRINTS" id="PR01357">
    <property type="entry name" value="INTRLEUKN1AB"/>
</dbReference>
<dbReference type="SMART" id="SM00125">
    <property type="entry name" value="IL1"/>
    <property type="match status" value="1"/>
</dbReference>
<dbReference type="SUPFAM" id="SSF50353">
    <property type="entry name" value="Cytokine"/>
    <property type="match status" value="1"/>
</dbReference>
<dbReference type="PROSITE" id="PS00253">
    <property type="entry name" value="INTERLEUKIN_1"/>
    <property type="match status" value="1"/>
</dbReference>
<keyword id="KW-0007">Acetylation</keyword>
<keyword id="KW-0202">Cytokine</keyword>
<keyword id="KW-0963">Cytoplasm</keyword>
<keyword id="KW-0325">Glycoprotein</keyword>
<keyword id="KW-0395">Inflammatory response</keyword>
<keyword id="KW-0497">Mitogen</keyword>
<keyword id="KW-0539">Nucleus</keyword>
<keyword id="KW-0597">Phosphoprotein</keyword>
<keyword id="KW-0666">Pyrogen</keyword>
<keyword id="KW-1185">Reference proteome</keyword>
<keyword id="KW-0964">Secreted</keyword>
<feature type="propeptide" id="PRO_0000015275">
    <location>
        <begin position="1"/>
        <end position="112"/>
    </location>
</feature>
<feature type="chain" id="PRO_0000015276" description="Interleukin-1 alpha">
    <location>
        <begin position="113"/>
        <end position="270"/>
    </location>
</feature>
<feature type="region of interest" description="Nuclear localization signal (NLS)" evidence="2">
    <location>
        <begin position="82"/>
        <end position="86"/>
    </location>
</feature>
<feature type="modified residue" description="N6-acetyllysine" evidence="2">
    <location>
        <position position="82"/>
    </location>
</feature>
<feature type="modified residue" description="Phosphoserine" evidence="1">
    <location>
        <position position="87"/>
    </location>
</feature>
<feature type="glycosylation site" description="N-linked (GlcNAc...) asparagine" evidence="3">
    <location>
        <position position="102"/>
    </location>
</feature>
<feature type="glycosylation site" description="N-linked (GlcNAc...) asparagine" evidence="3">
    <location>
        <position position="141"/>
    </location>
</feature>
<feature type="sequence conflict" description="In Ref. 2; AAA73198." evidence="4" ref="2">
    <original>N</original>
    <variation>I</variation>
    <location>
        <position position="89"/>
    </location>
</feature>
<feature type="sequence conflict" description="In Ref. 2; AAA73198." evidence="4" ref="2">
    <original>F</original>
    <variation>L</variation>
    <location>
        <position position="242"/>
    </location>
</feature>
<feature type="sequence conflict" description="In Ref. 2; AAA73198." evidence="4" ref="2">
    <original>P</original>
    <variation>R</variation>
    <location>
        <position position="255"/>
    </location>
</feature>
<gene>
    <name type="primary">IL1A</name>
</gene>
<sequence>MAKVPDLFEDLKNCYSENEEYSSDIDHLSLNQKSFYDASYEPLPGDGMDKFMPLSTSKTSKTSRLNFKDSVVMAAANGKILKKRRLSLNQFITDDDLEAIANDTEEEIIKPRSATYSFQSNMKYNFMRVINHQCILNDARNQSIIRDPSGQYLMAAVLNNLDEAVKFDMAAYTSNDDSQLPVTLRISETRLFVSAQNEDEPVLLKELPETPKTIKDETSLLFFWEKHGNMDYFKSAAHPKLFIATRQEKLVHMAPGLPSVTDFQILENQS</sequence>
<organism>
    <name type="scientific">Sus scrofa</name>
    <name type="common">Pig</name>
    <dbReference type="NCBI Taxonomy" id="9823"/>
    <lineage>
        <taxon>Eukaryota</taxon>
        <taxon>Metazoa</taxon>
        <taxon>Chordata</taxon>
        <taxon>Craniata</taxon>
        <taxon>Vertebrata</taxon>
        <taxon>Euteleostomi</taxon>
        <taxon>Mammalia</taxon>
        <taxon>Eutheria</taxon>
        <taxon>Laurasiatheria</taxon>
        <taxon>Artiodactyla</taxon>
        <taxon>Suina</taxon>
        <taxon>Suidae</taxon>
        <taxon>Sus</taxon>
    </lineage>
</organism>
<name>IL1A_PIG</name>
<protein>
    <recommendedName>
        <fullName>Interleukin-1 alpha</fullName>
        <shortName>IL-1 alpha</shortName>
    </recommendedName>
</protein>
<evidence type="ECO:0000250" key="1">
    <source>
        <dbReference type="UniProtKB" id="P01582"/>
    </source>
</evidence>
<evidence type="ECO:0000250" key="2">
    <source>
        <dbReference type="UniProtKB" id="P01583"/>
    </source>
</evidence>
<evidence type="ECO:0000255" key="3"/>
<evidence type="ECO:0000305" key="4"/>
<proteinExistence type="evidence at transcript level"/>
<reference key="1">
    <citation type="journal article" date="1990" name="Nucleic Acids Res.">
        <title>Porcine IL-1 alpha cDNA nucleotide sequence.</title>
        <authorList>
            <person name="Maliszewski C.R."/>
            <person name="Renshaw B.R."/>
            <person name="Schoenborn M.A."/>
            <person name="Urban J.F. Jr."/>
            <person name="Baker P.E."/>
        </authorList>
    </citation>
    <scope>NUCLEOTIDE SEQUENCE [MRNA]</scope>
    <source>
        <tissue>Lung</tissue>
    </source>
</reference>
<reference key="2">
    <citation type="submission" date="1992-02" db="EMBL/GenBank/DDBJ databases">
        <title>Cloning and sequencing of a cDNA encoding porcine interleukin-1 alpha.</title>
        <authorList>
            <person name="Huether M.J."/>
            <person name="Scamurra R.W."/>
            <person name="Murtaugh M.P."/>
            <person name="Molitor T.W."/>
        </authorList>
    </citation>
    <scope>NUCLEOTIDE SEQUENCE [MRNA]</scope>
</reference>
<accession>P18430</accession>
<comment type="function">
    <text evidence="2">Cytokine constitutively present intracellularly in nearly all resting non-hematopoietic cells that plays an important role in inflammation and bridges the innate and adaptive immune systems. After binding to its receptor IL1R1 together with its accessory protein IL1RAP, forms the high affinity interleukin-1 receptor complex. Signaling involves the recruitment of adapter molecules such as MYD88, IRAK1 or IRAK4. In turn, mediates the activation of NF-kappa-B and the three MAPK pathways p38, p42/p44 and JNK pathways. Within the cell, acts as an alarmin and cell death results in its liberation in the extracellular space after disruption of the cell membrane to induce inflammation and alert the host to injury or damage. In addition to its role as a danger signal, which occurs when the cytokine is passively released by cell necrosis, directly senses DNA damage and acts as signal for genotoxic stress without loss of cell integrity.</text>
</comment>
<comment type="subunit">
    <text evidence="2">Monomer. Interacts with TMED10; the interaction mediates the translocation from the cytoplasm into the ERGIC (endoplasmic reticulum-Golgi intermediate compartment) and thereby secretion. Interacts with IL1R1. Interacts with S100A13; this interaction is the first step in the export of IL1A, followed by direct translocation of this complex across the plasma membrane.</text>
</comment>
<comment type="subcellular location">
    <subcellularLocation>
        <location evidence="2">Nucleus</location>
    </subcellularLocation>
    <subcellularLocation>
        <location evidence="2">Cytoplasm</location>
    </subcellularLocation>
    <subcellularLocation>
        <location evidence="2">Secreted</location>
    </subcellularLocation>
    <text evidence="2">The lack of a specific hydrophobic segment in the precursor sequence suggests that IL-1 is released by damaged cells or is secreted by a mechanism differing from that used for other secretory proteins. The secretion is dependent on protein unfolding and facilitated by the cargo receptor TMED10; it results in protein translocation from the cytoplasm into the ERGIC (endoplasmic reticulum-Golgi intermediate compartment) followed by vesicle entry and secretion. Recruited to DNA damage sites and secreted after genotoxic stress.</text>
</comment>
<comment type="domain">
    <text>The similarity among the IL-1 precursors suggests that the amino ends of these proteins serve some as yet undefined function.</text>
</comment>
<comment type="PTM">
    <text evidence="2">Acetylated within its nuclear localization sequence, which impacts subcellular localization.</text>
</comment>
<comment type="PTM">
    <text evidence="2">Proteolytic processed by CAPN1 in a calcium-dependent manner. Cleavage from 31 kDa precursor to 18 kDa biologically active molecules.</text>
</comment>
<comment type="PTM">
    <text evidence="2">Phosphorylated. Phosphorylation greatly enhances susceptibility to digestion and promotes the conversion of pre-IL1A alpha to the biologically active IL1A.</text>
</comment>
<comment type="similarity">
    <text evidence="4">Belongs to the IL-1 family.</text>
</comment>